<name>KCY_LEPBL</name>
<dbReference type="EC" id="2.7.4.25" evidence="1"/>
<dbReference type="EMBL" id="CP000348">
    <property type="protein sequence ID" value="ABJ79511.1"/>
    <property type="molecule type" value="Genomic_DNA"/>
</dbReference>
<dbReference type="RefSeq" id="WP_011670562.1">
    <property type="nucleotide sequence ID" value="NC_008508.1"/>
</dbReference>
<dbReference type="SMR" id="Q04ZI4"/>
<dbReference type="KEGG" id="lbl:LBL_2098"/>
<dbReference type="HOGENOM" id="CLU_079959_0_2_12"/>
<dbReference type="GO" id="GO:0005829">
    <property type="term" value="C:cytosol"/>
    <property type="evidence" value="ECO:0007669"/>
    <property type="project" value="TreeGrafter"/>
</dbReference>
<dbReference type="GO" id="GO:0005524">
    <property type="term" value="F:ATP binding"/>
    <property type="evidence" value="ECO:0007669"/>
    <property type="project" value="UniProtKB-UniRule"/>
</dbReference>
<dbReference type="GO" id="GO:0036430">
    <property type="term" value="F:CMP kinase activity"/>
    <property type="evidence" value="ECO:0007669"/>
    <property type="project" value="RHEA"/>
</dbReference>
<dbReference type="GO" id="GO:0036431">
    <property type="term" value="F:dCMP kinase activity"/>
    <property type="evidence" value="ECO:0007669"/>
    <property type="project" value="RHEA"/>
</dbReference>
<dbReference type="GO" id="GO:0015949">
    <property type="term" value="P:nucleobase-containing small molecule interconversion"/>
    <property type="evidence" value="ECO:0007669"/>
    <property type="project" value="TreeGrafter"/>
</dbReference>
<dbReference type="GO" id="GO:0006220">
    <property type="term" value="P:pyrimidine nucleotide metabolic process"/>
    <property type="evidence" value="ECO:0007669"/>
    <property type="project" value="UniProtKB-UniRule"/>
</dbReference>
<dbReference type="CDD" id="cd02020">
    <property type="entry name" value="CMPK"/>
    <property type="match status" value="1"/>
</dbReference>
<dbReference type="FunFam" id="3.40.50.300:FF:001608">
    <property type="entry name" value="Cytidylate kinase"/>
    <property type="match status" value="1"/>
</dbReference>
<dbReference type="Gene3D" id="3.40.50.300">
    <property type="entry name" value="P-loop containing nucleotide triphosphate hydrolases"/>
    <property type="match status" value="1"/>
</dbReference>
<dbReference type="HAMAP" id="MF_00238">
    <property type="entry name" value="Cytidyl_kinase_type1"/>
    <property type="match status" value="1"/>
</dbReference>
<dbReference type="InterPro" id="IPR003136">
    <property type="entry name" value="Cytidylate_kin"/>
</dbReference>
<dbReference type="InterPro" id="IPR011994">
    <property type="entry name" value="Cytidylate_kinase_dom"/>
</dbReference>
<dbReference type="InterPro" id="IPR027417">
    <property type="entry name" value="P-loop_NTPase"/>
</dbReference>
<dbReference type="NCBIfam" id="TIGR00017">
    <property type="entry name" value="cmk"/>
    <property type="match status" value="1"/>
</dbReference>
<dbReference type="PANTHER" id="PTHR21299:SF2">
    <property type="entry name" value="CYTIDYLATE KINASE"/>
    <property type="match status" value="1"/>
</dbReference>
<dbReference type="PANTHER" id="PTHR21299">
    <property type="entry name" value="CYTIDYLATE KINASE/PANTOATE-BETA-ALANINE LIGASE"/>
    <property type="match status" value="1"/>
</dbReference>
<dbReference type="Pfam" id="PF02224">
    <property type="entry name" value="Cytidylate_kin"/>
    <property type="match status" value="1"/>
</dbReference>
<dbReference type="SUPFAM" id="SSF52540">
    <property type="entry name" value="P-loop containing nucleoside triphosphate hydrolases"/>
    <property type="match status" value="1"/>
</dbReference>
<accession>Q04ZI4</accession>
<evidence type="ECO:0000255" key="1">
    <source>
        <dbReference type="HAMAP-Rule" id="MF_00238"/>
    </source>
</evidence>
<organism>
    <name type="scientific">Leptospira borgpetersenii serovar Hardjo-bovis (strain L550)</name>
    <dbReference type="NCBI Taxonomy" id="355276"/>
    <lineage>
        <taxon>Bacteria</taxon>
        <taxon>Pseudomonadati</taxon>
        <taxon>Spirochaetota</taxon>
        <taxon>Spirochaetia</taxon>
        <taxon>Leptospirales</taxon>
        <taxon>Leptospiraceae</taxon>
        <taxon>Leptospira</taxon>
    </lineage>
</organism>
<comment type="catalytic activity">
    <reaction evidence="1">
        <text>CMP + ATP = CDP + ADP</text>
        <dbReference type="Rhea" id="RHEA:11600"/>
        <dbReference type="ChEBI" id="CHEBI:30616"/>
        <dbReference type="ChEBI" id="CHEBI:58069"/>
        <dbReference type="ChEBI" id="CHEBI:60377"/>
        <dbReference type="ChEBI" id="CHEBI:456216"/>
        <dbReference type="EC" id="2.7.4.25"/>
    </reaction>
</comment>
<comment type="catalytic activity">
    <reaction evidence="1">
        <text>dCMP + ATP = dCDP + ADP</text>
        <dbReference type="Rhea" id="RHEA:25094"/>
        <dbReference type="ChEBI" id="CHEBI:30616"/>
        <dbReference type="ChEBI" id="CHEBI:57566"/>
        <dbReference type="ChEBI" id="CHEBI:58593"/>
        <dbReference type="ChEBI" id="CHEBI:456216"/>
        <dbReference type="EC" id="2.7.4.25"/>
    </reaction>
</comment>
<comment type="subcellular location">
    <subcellularLocation>
        <location evidence="1">Cytoplasm</location>
    </subcellularLocation>
</comment>
<comment type="similarity">
    <text evidence="1">Belongs to the cytidylate kinase family. Type 1 subfamily.</text>
</comment>
<keyword id="KW-0067">ATP-binding</keyword>
<keyword id="KW-0963">Cytoplasm</keyword>
<keyword id="KW-0418">Kinase</keyword>
<keyword id="KW-0547">Nucleotide-binding</keyword>
<keyword id="KW-0808">Transferase</keyword>
<proteinExistence type="inferred from homology"/>
<sequence length="230" mass="26317">MNENVIALDGPAGSGKSTVARQIAERIGFNYLDTGAFYRALTLYLFRLHGNSPNTESFADWVKTSEAERSLSDIRILCEFSAGKENRIFLNGEEVSLAIRTPEITREIKHIAKRRIYRNFVNQELHSLAKLHKLIIDGRDIGTEVFPDAKFKFYLTASSKVRAERRFLQLQEQGIEADRDEIEKEIILRDKSDMEREIAPLYQANDAILIDTDILSKNSVISKILKILDR</sequence>
<feature type="chain" id="PRO_1000048229" description="Cytidylate kinase">
    <location>
        <begin position="1"/>
        <end position="230"/>
    </location>
</feature>
<feature type="binding site" evidence="1">
    <location>
        <begin position="10"/>
        <end position="18"/>
    </location>
    <ligand>
        <name>ATP</name>
        <dbReference type="ChEBI" id="CHEBI:30616"/>
    </ligand>
</feature>
<protein>
    <recommendedName>
        <fullName evidence="1">Cytidylate kinase</fullName>
        <shortName evidence="1">CK</shortName>
        <ecNumber evidence="1">2.7.4.25</ecNumber>
    </recommendedName>
    <alternativeName>
        <fullName evidence="1">Cytidine monophosphate kinase</fullName>
        <shortName evidence="1">CMP kinase</shortName>
    </alternativeName>
</protein>
<reference key="1">
    <citation type="journal article" date="2006" name="Proc. Natl. Acad. Sci. U.S.A.">
        <title>Genome reduction in Leptospira borgpetersenii reflects limited transmission potential.</title>
        <authorList>
            <person name="Bulach D.M."/>
            <person name="Zuerner R.L."/>
            <person name="Wilson P."/>
            <person name="Seemann T."/>
            <person name="McGrath A."/>
            <person name="Cullen P.A."/>
            <person name="Davis J."/>
            <person name="Johnson M."/>
            <person name="Kuczek E."/>
            <person name="Alt D.P."/>
            <person name="Peterson-Burch B."/>
            <person name="Coppel R.L."/>
            <person name="Rood J.I."/>
            <person name="Davies J.K."/>
            <person name="Adler B."/>
        </authorList>
    </citation>
    <scope>NUCLEOTIDE SEQUENCE [LARGE SCALE GENOMIC DNA]</scope>
    <source>
        <strain>L550</strain>
    </source>
</reference>
<gene>
    <name evidence="1" type="primary">cmk</name>
    <name type="ordered locus">LBL_2098</name>
</gene>